<accession>Q12WL3</accession>
<reference key="1">
    <citation type="journal article" date="2009" name="ISME J.">
        <title>The genome sequence of the psychrophilic archaeon, Methanococcoides burtonii: the role of genome evolution in cold adaptation.</title>
        <authorList>
            <person name="Allen M.A."/>
            <person name="Lauro F.M."/>
            <person name="Williams T.J."/>
            <person name="Burg D."/>
            <person name="Siddiqui K.S."/>
            <person name="De Francisci D."/>
            <person name="Chong K.W."/>
            <person name="Pilak O."/>
            <person name="Chew H.H."/>
            <person name="De Maere M.Z."/>
            <person name="Ting L."/>
            <person name="Katrib M."/>
            <person name="Ng C."/>
            <person name="Sowers K.R."/>
            <person name="Galperin M.Y."/>
            <person name="Anderson I.J."/>
            <person name="Ivanova N."/>
            <person name="Dalin E."/>
            <person name="Martinez M."/>
            <person name="Lapidus A."/>
            <person name="Hauser L."/>
            <person name="Land M."/>
            <person name="Thomas T."/>
            <person name="Cavicchioli R."/>
        </authorList>
    </citation>
    <scope>NUCLEOTIDE SEQUENCE [LARGE SCALE GENOMIC DNA]</scope>
    <source>
        <strain>DSM 6242 / NBRC 107633 / OCM 468 / ACE-M</strain>
    </source>
</reference>
<sequence length="357" mass="40934">MRLLQKFTRKSSLKQSGSSSNYAYVTARVRAMKSNLLPREVYPRLMNMGIDEITRFIEESQYKQDVDELARTYDGVDLFEHALNRNLAVTFTKLINISEGELNYLISEYLRKYDIWSIKTILRGKYCGASVEEINDSIVSAGQLSYPFLLSLSEKESYESIIDALSGTDYYPTLKEYDGTNLSDIENKLDKMYYTGLSTTVNNPKSNDSKLFSKFIRTEIDIKNLSTLFRLKNAGVEKDEIADLILEGGLHLSIKEIEKLLPLPFSEFVQSLEKYPYWEDISGIVKTEMDSLIELETQLTRSNIKSASSFSHVYPLSIVPIMDYILNKTNEVHNLRIILRGKAANLDEEIIRNQLVI</sequence>
<proteinExistence type="inferred from homology"/>
<comment type="function">
    <text evidence="1">Component of the A-type ATP synthase that produces ATP from ADP in the presence of a proton gradient across the membrane.</text>
</comment>
<comment type="subunit">
    <text evidence="1">Has multiple subunits with at least A(3), B(3), C, D, E, F, H, I and proteolipid K(x).</text>
</comment>
<comment type="subcellular location">
    <subcellularLocation>
        <location evidence="1">Cell membrane</location>
        <topology evidence="1">Peripheral membrane protein</topology>
    </subcellularLocation>
</comment>
<comment type="similarity">
    <text evidence="1">Belongs to the V-ATPase V0D/AC39 subunit family.</text>
</comment>
<keyword id="KW-0066">ATP synthesis</keyword>
<keyword id="KW-1003">Cell membrane</keyword>
<keyword id="KW-0375">Hydrogen ion transport</keyword>
<keyword id="KW-0406">Ion transport</keyword>
<keyword id="KW-0472">Membrane</keyword>
<keyword id="KW-0813">Transport</keyword>
<feature type="chain" id="PRO_1000048370" description="A-type ATP synthase subunit C">
    <location>
        <begin position="1"/>
        <end position="357"/>
    </location>
</feature>
<gene>
    <name evidence="1" type="primary">atpC</name>
    <name type="ordered locus">Mbur_1241</name>
</gene>
<dbReference type="EMBL" id="CP000300">
    <property type="protein sequence ID" value="ABE52163.1"/>
    <property type="molecule type" value="Genomic_DNA"/>
</dbReference>
<dbReference type="RefSeq" id="WP_011499309.1">
    <property type="nucleotide sequence ID" value="NC_007955.1"/>
</dbReference>
<dbReference type="SMR" id="Q12WL3"/>
<dbReference type="STRING" id="259564.Mbur_1241"/>
<dbReference type="GeneID" id="3998565"/>
<dbReference type="KEGG" id="mbu:Mbur_1241"/>
<dbReference type="HOGENOM" id="CLU_059311_0_1_2"/>
<dbReference type="OrthoDB" id="4272at2157"/>
<dbReference type="Proteomes" id="UP000001979">
    <property type="component" value="Chromosome"/>
</dbReference>
<dbReference type="GO" id="GO:0005886">
    <property type="term" value="C:plasma membrane"/>
    <property type="evidence" value="ECO:0007669"/>
    <property type="project" value="UniProtKB-SubCell"/>
</dbReference>
<dbReference type="GO" id="GO:0033179">
    <property type="term" value="C:proton-transporting V-type ATPase, V0 domain"/>
    <property type="evidence" value="ECO:0007669"/>
    <property type="project" value="InterPro"/>
</dbReference>
<dbReference type="GO" id="GO:0005524">
    <property type="term" value="F:ATP binding"/>
    <property type="evidence" value="ECO:0007669"/>
    <property type="project" value="UniProtKB-UniRule"/>
</dbReference>
<dbReference type="GO" id="GO:0046933">
    <property type="term" value="F:proton-transporting ATP synthase activity, rotational mechanism"/>
    <property type="evidence" value="ECO:0007669"/>
    <property type="project" value="UniProtKB-UniRule"/>
</dbReference>
<dbReference type="GO" id="GO:0046961">
    <property type="term" value="F:proton-transporting ATPase activity, rotational mechanism"/>
    <property type="evidence" value="ECO:0007669"/>
    <property type="project" value="InterPro"/>
</dbReference>
<dbReference type="GO" id="GO:0042777">
    <property type="term" value="P:proton motive force-driven plasma membrane ATP synthesis"/>
    <property type="evidence" value="ECO:0007669"/>
    <property type="project" value="UniProtKB-UniRule"/>
</dbReference>
<dbReference type="Gene3D" id="1.10.132.50">
    <property type="entry name" value="ATP synthase (C/AC39) subunit, domain 3"/>
    <property type="match status" value="1"/>
</dbReference>
<dbReference type="Gene3D" id="1.20.1690.10">
    <property type="entry name" value="V-type ATP synthase subunit C domain"/>
    <property type="match status" value="2"/>
</dbReference>
<dbReference type="HAMAP" id="MF_00314">
    <property type="entry name" value="ATP_synth_C_arch"/>
    <property type="match status" value="1"/>
</dbReference>
<dbReference type="InterPro" id="IPR036079">
    <property type="entry name" value="ATPase_csu/dsu_sf"/>
</dbReference>
<dbReference type="InterPro" id="IPR014272">
    <property type="entry name" value="ATPase_V0-cplx_csu"/>
</dbReference>
<dbReference type="InterPro" id="IPR002843">
    <property type="entry name" value="ATPase_V0-cplx_csu/dsu"/>
</dbReference>
<dbReference type="InterPro" id="IPR050873">
    <property type="entry name" value="V-ATPase_V0D/AC39_subunit"/>
</dbReference>
<dbReference type="InterPro" id="IPR035067">
    <property type="entry name" value="V-type_ATPase_csu/dsu"/>
</dbReference>
<dbReference type="InterPro" id="IPR044911">
    <property type="entry name" value="V-type_ATPase_csu/dsu_dom_3"/>
</dbReference>
<dbReference type="NCBIfam" id="TIGR02923">
    <property type="entry name" value="AhaC"/>
    <property type="match status" value="1"/>
</dbReference>
<dbReference type="NCBIfam" id="NF002268">
    <property type="entry name" value="PRK01198.1-4"/>
    <property type="match status" value="1"/>
</dbReference>
<dbReference type="PANTHER" id="PTHR38682">
    <property type="entry name" value="V-TYPE ATP SYNTHASE SUBUNIT C"/>
    <property type="match status" value="1"/>
</dbReference>
<dbReference type="PANTHER" id="PTHR38682:SF1">
    <property type="entry name" value="V-TYPE ATP SYNTHASE SUBUNIT C"/>
    <property type="match status" value="1"/>
</dbReference>
<dbReference type="Pfam" id="PF01992">
    <property type="entry name" value="vATP-synt_AC39"/>
    <property type="match status" value="1"/>
</dbReference>
<dbReference type="SUPFAM" id="SSF103486">
    <property type="entry name" value="V-type ATP synthase subunit C"/>
    <property type="match status" value="1"/>
</dbReference>
<evidence type="ECO:0000255" key="1">
    <source>
        <dbReference type="HAMAP-Rule" id="MF_00314"/>
    </source>
</evidence>
<organism>
    <name type="scientific">Methanococcoides burtonii (strain DSM 6242 / NBRC 107633 / OCM 468 / ACE-M)</name>
    <dbReference type="NCBI Taxonomy" id="259564"/>
    <lineage>
        <taxon>Archaea</taxon>
        <taxon>Methanobacteriati</taxon>
        <taxon>Methanobacteriota</taxon>
        <taxon>Stenosarchaea group</taxon>
        <taxon>Methanomicrobia</taxon>
        <taxon>Methanosarcinales</taxon>
        <taxon>Methanosarcinaceae</taxon>
        <taxon>Methanococcoides</taxon>
    </lineage>
</organism>
<protein>
    <recommendedName>
        <fullName evidence="1">A-type ATP synthase subunit C</fullName>
    </recommendedName>
</protein>
<name>AATC_METBU</name>